<dbReference type="EMBL" id="AM933173">
    <property type="protein sequence ID" value="CAR36114.1"/>
    <property type="molecule type" value="Genomic_DNA"/>
</dbReference>
<dbReference type="RefSeq" id="WP_000845429.1">
    <property type="nucleotide sequence ID" value="NC_011274.1"/>
</dbReference>
<dbReference type="SMR" id="B5RHE1"/>
<dbReference type="KEGG" id="seg:SG0207"/>
<dbReference type="HOGENOM" id="CLU_015263_7_0_6"/>
<dbReference type="Proteomes" id="UP000008321">
    <property type="component" value="Chromosome"/>
</dbReference>
<dbReference type="GO" id="GO:0005886">
    <property type="term" value="C:plasma membrane"/>
    <property type="evidence" value="ECO:0007669"/>
    <property type="project" value="UniProtKB-SubCell"/>
</dbReference>
<dbReference type="GO" id="GO:0015297">
    <property type="term" value="F:antiporter activity"/>
    <property type="evidence" value="ECO:0007669"/>
    <property type="project" value="UniProtKB-UniRule"/>
</dbReference>
<dbReference type="GO" id="GO:0005247">
    <property type="term" value="F:voltage-gated chloride channel activity"/>
    <property type="evidence" value="ECO:0007669"/>
    <property type="project" value="TreeGrafter"/>
</dbReference>
<dbReference type="CDD" id="cd01031">
    <property type="entry name" value="EriC"/>
    <property type="match status" value="1"/>
</dbReference>
<dbReference type="FunFam" id="1.10.3080.10:FF:000005">
    <property type="entry name" value="H(+)/Cl(-) exchange transporter ClcA"/>
    <property type="match status" value="1"/>
</dbReference>
<dbReference type="Gene3D" id="1.10.3080.10">
    <property type="entry name" value="Clc chloride channel"/>
    <property type="match status" value="1"/>
</dbReference>
<dbReference type="HAMAP" id="MF_01128">
    <property type="entry name" value="CLC_ClcA"/>
    <property type="match status" value="1"/>
</dbReference>
<dbReference type="InterPro" id="IPR023861">
    <property type="entry name" value="Cl-channel_ClcA"/>
</dbReference>
<dbReference type="InterPro" id="IPR014743">
    <property type="entry name" value="Cl-channel_core"/>
</dbReference>
<dbReference type="InterPro" id="IPR001807">
    <property type="entry name" value="ClC"/>
</dbReference>
<dbReference type="NCBIfam" id="NF003640">
    <property type="entry name" value="PRK05277.1"/>
    <property type="match status" value="1"/>
</dbReference>
<dbReference type="PANTHER" id="PTHR45711">
    <property type="entry name" value="CHLORIDE CHANNEL PROTEIN"/>
    <property type="match status" value="1"/>
</dbReference>
<dbReference type="PANTHER" id="PTHR45711:SF6">
    <property type="entry name" value="CHLORIDE CHANNEL PROTEIN"/>
    <property type="match status" value="1"/>
</dbReference>
<dbReference type="Pfam" id="PF00654">
    <property type="entry name" value="Voltage_CLC"/>
    <property type="match status" value="1"/>
</dbReference>
<dbReference type="PRINTS" id="PR00762">
    <property type="entry name" value="CLCHANNEL"/>
</dbReference>
<dbReference type="SUPFAM" id="SSF81340">
    <property type="entry name" value="Clc chloride channel"/>
    <property type="match status" value="1"/>
</dbReference>
<comment type="function">
    <text evidence="1">Proton-coupled chloride transporter. Functions as antiport system and exchanges two chloride ions for 1 proton. Probably acts as an electrical shunt for an outwardly-directed proton pump that is linked to amino acid decarboxylation, as part of the extreme acid resistance (XAR) response.</text>
</comment>
<comment type="catalytic activity">
    <reaction evidence="1">
        <text>2 chloride(in) + H(+)(out) = 2 chloride(out) + H(+)(in)</text>
        <dbReference type="Rhea" id="RHEA:29567"/>
        <dbReference type="ChEBI" id="CHEBI:15378"/>
        <dbReference type="ChEBI" id="CHEBI:17996"/>
    </reaction>
</comment>
<comment type="subunit">
    <text evidence="1">Homodimer.</text>
</comment>
<comment type="subcellular location">
    <subcellularLocation>
        <location evidence="1">Cell inner membrane</location>
        <topology evidence="1">Multi-pass membrane protein</topology>
    </subcellularLocation>
</comment>
<comment type="similarity">
    <text evidence="1">Belongs to the chloride channel (TC 2.A.49) family. ClcA subfamily.</text>
</comment>
<name>CLCA_SALG2</name>
<gene>
    <name evidence="1" type="primary">clcA</name>
    <name evidence="1" type="synonym">eriC</name>
    <name type="ordered locus">SG0207</name>
</gene>
<protein>
    <recommendedName>
        <fullName evidence="1">H(+)/Cl(-) exchange transporter ClcA</fullName>
    </recommendedName>
</protein>
<evidence type="ECO:0000255" key="1">
    <source>
        <dbReference type="HAMAP-Rule" id="MF_01128"/>
    </source>
</evidence>
<sequence>MKTDTSTFLAQQIVRLRRRDQIRRLMQRDKTPLAILFMAAVVGTLTGLVGVAFEKAVSWVQNMRIGALVQVADHAFLLWPLAFILSALLAMVGYFLVRKFAPEAGGSGIPEIEGALEELRPVRWWRVLPVKFIGGMGTLGAGMVLGREGPTVQIGGNLGRMVLDVFRMRSAEARHTLLATGAAAGLSAAFNAPLAGILFIIEEMRPQFRYNLISIKAVFTGVIMSSIVFRIFNGEAPIIEVGKLSDAPVNTLWLYLILGIIFGCVGPVFNSLVLRTQDMFQRFHGGEIKKWVLMGGAIGGLCGILGLIEPEAAGGGFNLIPIAAAGNFSVGLLLFIFIARVVTTLLCFSSGAPGGIFAPMLALGTLLGTAFGMAAAVLFPQYHLEAGTFAIAGMGALMAASVRAPLTGIVLVLEMTDNYQLILPMIITCLGATLLAQFLGGKPLYSTILARTLAKQDAEQAAKSQNAPAGENT</sequence>
<feature type="chain" id="PRO_1000137306" description="H(+)/Cl(-) exchange transporter ClcA">
    <location>
        <begin position="1"/>
        <end position="473"/>
    </location>
</feature>
<feature type="topological domain" description="Cytoplasmic" evidence="1">
    <location>
        <begin position="1"/>
        <end position="32"/>
    </location>
</feature>
<feature type="transmembrane region" description="Helical" evidence="1">
    <location>
        <begin position="33"/>
        <end position="69"/>
    </location>
</feature>
<feature type="topological domain" description="Periplasmic" evidence="1">
    <location>
        <begin position="70"/>
        <end position="76"/>
    </location>
</feature>
<feature type="transmembrane region" description="Helical" evidence="1">
    <location>
        <begin position="77"/>
        <end position="100"/>
    </location>
</feature>
<feature type="intramembrane region" description="Helical" evidence="1">
    <location>
        <begin position="109"/>
        <end position="116"/>
    </location>
</feature>
<feature type="topological domain" description="Cytoplasmic" evidence="1">
    <location>
        <begin position="117"/>
        <end position="123"/>
    </location>
</feature>
<feature type="transmembrane region" description="Helical" evidence="1">
    <location>
        <begin position="124"/>
        <end position="141"/>
    </location>
</feature>
<feature type="transmembrane region" description="Helical" evidence="1">
    <location>
        <begin position="148"/>
        <end position="166"/>
    </location>
</feature>
<feature type="topological domain" description="Cytoplasmic" evidence="1">
    <location>
        <begin position="167"/>
        <end position="176"/>
    </location>
</feature>
<feature type="intramembrane region" description="Helical" evidence="1">
    <location>
        <begin position="177"/>
        <end position="189"/>
    </location>
</feature>
<feature type="intramembrane region" description="Helical" evidence="1">
    <location>
        <begin position="193"/>
        <end position="201"/>
    </location>
</feature>
<feature type="topological domain" description="Cytoplasmic" evidence="1">
    <location>
        <begin position="202"/>
        <end position="214"/>
    </location>
</feature>
<feature type="transmembrane region" description="Helical" evidence="1">
    <location>
        <begin position="215"/>
        <end position="232"/>
    </location>
</feature>
<feature type="topological domain" description="Periplasmic" evidence="1">
    <location>
        <begin position="233"/>
        <end position="252"/>
    </location>
</feature>
<feature type="transmembrane region" description="Helical" evidence="1">
    <location>
        <begin position="253"/>
        <end position="281"/>
    </location>
</feature>
<feature type="topological domain" description="Cytoplasmic" evidence="1">
    <location>
        <begin position="282"/>
        <end position="287"/>
    </location>
</feature>
<feature type="transmembrane region" description="Helical" evidence="1">
    <location>
        <begin position="288"/>
        <end position="309"/>
    </location>
</feature>
<feature type="topological domain" description="Periplasmic" evidence="1">
    <location>
        <begin position="310"/>
        <end position="329"/>
    </location>
</feature>
<feature type="transmembrane region" description="Helical" evidence="1">
    <location>
        <begin position="330"/>
        <end position="349"/>
    </location>
</feature>
<feature type="transmembrane region" description="Helical" evidence="1">
    <location>
        <begin position="355"/>
        <end position="376"/>
    </location>
</feature>
<feature type="topological domain" description="Periplasmic" evidence="1">
    <location>
        <begin position="377"/>
        <end position="386"/>
    </location>
</feature>
<feature type="intramembrane region" description="Helical" evidence="1">
    <location>
        <begin position="387"/>
        <end position="401"/>
    </location>
</feature>
<feature type="intramembrane region" description="Note=Loop between two helices" evidence="1">
    <location>
        <begin position="402"/>
        <end position="404"/>
    </location>
</feature>
<feature type="intramembrane region" description="Helical" evidence="1">
    <location>
        <begin position="405"/>
        <end position="416"/>
    </location>
</feature>
<feature type="intramembrane region" description="Note=Loop between two helices" evidence="1">
    <location>
        <begin position="417"/>
        <end position="421"/>
    </location>
</feature>
<feature type="transmembrane region" description="Helical" evidence="1">
    <location>
        <begin position="422"/>
        <end position="438"/>
    </location>
</feature>
<feature type="topological domain" description="Cytoplasmic" evidence="1">
    <location>
        <begin position="439"/>
        <end position="473"/>
    </location>
</feature>
<feature type="short sequence motif" description="Selectivity filter part_1" evidence="1">
    <location>
        <begin position="106"/>
        <end position="110"/>
    </location>
</feature>
<feature type="short sequence motif" description="Selectivity filter part_2" evidence="1">
    <location>
        <begin position="146"/>
        <end position="150"/>
    </location>
</feature>
<feature type="short sequence motif" description="Selectivity filter part_3" evidence="1">
    <location>
        <begin position="355"/>
        <end position="359"/>
    </location>
</feature>
<feature type="binding site" evidence="1">
    <location>
        <position position="107"/>
    </location>
    <ligand>
        <name>chloride</name>
        <dbReference type="ChEBI" id="CHEBI:17996"/>
    </ligand>
</feature>
<feature type="binding site" evidence="1">
    <location>
        <position position="356"/>
    </location>
    <ligand>
        <name>chloride</name>
        <dbReference type="ChEBI" id="CHEBI:17996"/>
    </ligand>
</feature>
<feature type="binding site" evidence="1">
    <location>
        <position position="357"/>
    </location>
    <ligand>
        <name>chloride</name>
        <dbReference type="ChEBI" id="CHEBI:17996"/>
    </ligand>
</feature>
<feature type="binding site" evidence="1">
    <location>
        <position position="445"/>
    </location>
    <ligand>
        <name>chloride</name>
        <dbReference type="ChEBI" id="CHEBI:17996"/>
    </ligand>
</feature>
<feature type="site" description="Mediates proton transfer from the outer aqueous phase to the interior of the protein; involved in linking H(+) and Cl(-) transport" evidence="1">
    <location>
        <position position="148"/>
    </location>
</feature>
<feature type="site" description="Mediates proton transfer from the protein to the inner aqueous phase" evidence="1">
    <location>
        <position position="203"/>
    </location>
</feature>
<reference key="1">
    <citation type="journal article" date="2008" name="Genome Res.">
        <title>Comparative genome analysis of Salmonella enteritidis PT4 and Salmonella gallinarum 287/91 provides insights into evolutionary and host adaptation pathways.</title>
        <authorList>
            <person name="Thomson N.R."/>
            <person name="Clayton D.J."/>
            <person name="Windhorst D."/>
            <person name="Vernikos G."/>
            <person name="Davidson S."/>
            <person name="Churcher C."/>
            <person name="Quail M.A."/>
            <person name="Stevens M."/>
            <person name="Jones M.A."/>
            <person name="Watson M."/>
            <person name="Barron A."/>
            <person name="Layton A."/>
            <person name="Pickard D."/>
            <person name="Kingsley R.A."/>
            <person name="Bignell A."/>
            <person name="Clark L."/>
            <person name="Harris B."/>
            <person name="Ormond D."/>
            <person name="Abdellah Z."/>
            <person name="Brooks K."/>
            <person name="Cherevach I."/>
            <person name="Chillingworth T."/>
            <person name="Woodward J."/>
            <person name="Norberczak H."/>
            <person name="Lord A."/>
            <person name="Arrowsmith C."/>
            <person name="Jagels K."/>
            <person name="Moule S."/>
            <person name="Mungall K."/>
            <person name="Saunders M."/>
            <person name="Whitehead S."/>
            <person name="Chabalgoity J.A."/>
            <person name="Maskell D."/>
            <person name="Humphreys T."/>
            <person name="Roberts M."/>
            <person name="Barrow P.A."/>
            <person name="Dougan G."/>
            <person name="Parkhill J."/>
        </authorList>
    </citation>
    <scope>NUCLEOTIDE SEQUENCE [LARGE SCALE GENOMIC DNA]</scope>
    <source>
        <strain>287/91 / NCTC 13346</strain>
    </source>
</reference>
<keyword id="KW-0050">Antiport</keyword>
<keyword id="KW-0997">Cell inner membrane</keyword>
<keyword id="KW-1003">Cell membrane</keyword>
<keyword id="KW-0868">Chloride</keyword>
<keyword id="KW-0406">Ion transport</keyword>
<keyword id="KW-0472">Membrane</keyword>
<keyword id="KW-0812">Transmembrane</keyword>
<keyword id="KW-1133">Transmembrane helix</keyword>
<keyword id="KW-0813">Transport</keyword>
<accession>B5RHE1</accession>
<proteinExistence type="inferred from homology"/>
<organism>
    <name type="scientific">Salmonella gallinarum (strain 287/91 / NCTC 13346)</name>
    <dbReference type="NCBI Taxonomy" id="550538"/>
    <lineage>
        <taxon>Bacteria</taxon>
        <taxon>Pseudomonadati</taxon>
        <taxon>Pseudomonadota</taxon>
        <taxon>Gammaproteobacteria</taxon>
        <taxon>Enterobacterales</taxon>
        <taxon>Enterobacteriaceae</taxon>
        <taxon>Salmonella</taxon>
    </lineage>
</organism>